<evidence type="ECO:0000255" key="1">
    <source>
        <dbReference type="HAMAP-Rule" id="MF_00600"/>
    </source>
</evidence>
<proteinExistence type="inferred from homology"/>
<comment type="function">
    <text evidence="1">Together with its co-chaperonin GroES, plays an essential role in assisting protein folding. The GroEL-GroES system forms a nano-cage that allows encapsulation of the non-native substrate proteins and provides a physical environment optimized to promote and accelerate protein folding.</text>
</comment>
<comment type="catalytic activity">
    <reaction evidence="1">
        <text>ATP + H2O + a folded polypeptide = ADP + phosphate + an unfolded polypeptide.</text>
        <dbReference type="EC" id="5.6.1.7"/>
    </reaction>
</comment>
<comment type="subunit">
    <text evidence="1">Forms a cylinder of 14 subunits composed of two heptameric rings stacked back-to-back. Interacts with the co-chaperonin GroES.</text>
</comment>
<comment type="subcellular location">
    <subcellularLocation>
        <location evidence="1">Cytoplasm</location>
    </subcellularLocation>
</comment>
<comment type="similarity">
    <text evidence="1">Belongs to the chaperonin (HSP60) family.</text>
</comment>
<feature type="chain" id="PRO_0000063459" description="Chaperonin GroEL">
    <location>
        <begin position="1"/>
        <end position="544"/>
    </location>
</feature>
<feature type="binding site" evidence="1">
    <location>
        <begin position="30"/>
        <end position="33"/>
    </location>
    <ligand>
        <name>ATP</name>
        <dbReference type="ChEBI" id="CHEBI:30616"/>
    </ligand>
</feature>
<feature type="binding site" evidence="1">
    <location>
        <position position="51"/>
    </location>
    <ligand>
        <name>ATP</name>
        <dbReference type="ChEBI" id="CHEBI:30616"/>
    </ligand>
</feature>
<feature type="binding site" evidence="1">
    <location>
        <begin position="87"/>
        <end position="91"/>
    </location>
    <ligand>
        <name>ATP</name>
        <dbReference type="ChEBI" id="CHEBI:30616"/>
    </ligand>
</feature>
<feature type="binding site" evidence="1">
    <location>
        <position position="415"/>
    </location>
    <ligand>
        <name>ATP</name>
        <dbReference type="ChEBI" id="CHEBI:30616"/>
    </ligand>
</feature>
<feature type="binding site" evidence="1">
    <location>
        <position position="495"/>
    </location>
    <ligand>
        <name>ATP</name>
        <dbReference type="ChEBI" id="CHEBI:30616"/>
    </ligand>
</feature>
<reference key="1">
    <citation type="journal article" date="2000" name="Nature">
        <title>Complete DNA sequence of a serogroup A strain of Neisseria meningitidis Z2491.</title>
        <authorList>
            <person name="Parkhill J."/>
            <person name="Achtman M."/>
            <person name="James K.D."/>
            <person name="Bentley S.D."/>
            <person name="Churcher C.M."/>
            <person name="Klee S.R."/>
            <person name="Morelli G."/>
            <person name="Basham D."/>
            <person name="Brown D."/>
            <person name="Chillingworth T."/>
            <person name="Davies R.M."/>
            <person name="Davis P."/>
            <person name="Devlin K."/>
            <person name="Feltwell T."/>
            <person name="Hamlin N."/>
            <person name="Holroyd S."/>
            <person name="Jagels K."/>
            <person name="Leather S."/>
            <person name="Moule S."/>
            <person name="Mungall K.L."/>
            <person name="Quail M.A."/>
            <person name="Rajandream M.A."/>
            <person name="Rutherford K.M."/>
            <person name="Simmonds M."/>
            <person name="Skelton J."/>
            <person name="Whitehead S."/>
            <person name="Spratt B.G."/>
            <person name="Barrell B.G."/>
        </authorList>
    </citation>
    <scope>NUCLEOTIDE SEQUENCE [LARGE SCALE GENOMIC DNA]</scope>
    <source>
        <strain>DSM 15465 / Z2491</strain>
    </source>
</reference>
<sequence>MAAKDVQFGNEVRQKMVNGVNILANAVRVTLGPKGRNVVVDRAFGGPHITKDGVTVAKEIELKDKFENMGAQMVKEVASKTNDVAGDGTTTATVLAQSIVAEGMKYVTAGMNPTDLKRGIDKAVAALVEELKNIAKPCDTSKEIAQVGSISANSDEQVGAIIAEAMEKVGKEGVITVEDGKSLENELDVVEGMQFDRGYLSPYFINDAEKQIAGLDNPFVLLFDKKISNIRDLLPVLEQVAKASRPLLIIAEDVEGEALATLVVNNIRGILKTVAVKAPGFGDRRKAMLQDIAILTGGTVISEEVGLSLEKATLDDLGQAKRIEIGKENTTIIDGFGDAAQIEARVAEIRQQIETATSDYDKEKLQERVAKLAGGVAVIKVGAATEVEMKEKKDRVEDALHATRAAVEEGVVAGGGVALLRARAALENLHTGNADQDAGVQIVLRAVESPLRQIVANAGGEPSVVVNKVLEGKGNYGYNAGSGEYGDMIEMGVLDPAKVTRSALQHAASIAGLMLTTDCMIAEIPEDKPAMPDMGGMGGMGGMM</sequence>
<gene>
    <name evidence="1" type="primary">groEL</name>
    <name evidence="1" type="synonym">groL</name>
    <name type="synonym">hsp63</name>
    <name type="synonym">mopA</name>
    <name type="ordered locus">NMA0473</name>
</gene>
<protein>
    <recommendedName>
        <fullName evidence="1">Chaperonin GroEL</fullName>
        <ecNumber evidence="1">5.6.1.7</ecNumber>
    </recommendedName>
    <alternativeName>
        <fullName evidence="1">60 kDa chaperonin</fullName>
    </alternativeName>
    <alternativeName>
        <fullName>63 kDa stress protein</fullName>
    </alternativeName>
    <alternativeName>
        <fullName evidence="1">Chaperonin-60</fullName>
        <shortName evidence="1">Cpn60</shortName>
    </alternativeName>
    <alternativeName>
        <fullName>GSP63</fullName>
    </alternativeName>
    <alternativeName>
        <fullName>HSP60</fullName>
    </alternativeName>
</protein>
<dbReference type="EC" id="5.6.1.7" evidence="1"/>
<dbReference type="EMBL" id="AL157959">
    <property type="protein sequence ID" value="CAM07754.1"/>
    <property type="molecule type" value="Genomic_DNA"/>
</dbReference>
<dbReference type="PIR" id="H81964">
    <property type="entry name" value="H81964"/>
</dbReference>
<dbReference type="RefSeq" id="WP_002221652.1">
    <property type="nucleotide sequence ID" value="NC_003116.1"/>
</dbReference>
<dbReference type="SMR" id="P57006"/>
<dbReference type="EnsemblBacteria" id="CAM07754">
    <property type="protein sequence ID" value="CAM07754"/>
    <property type="gene ID" value="NMA0473"/>
</dbReference>
<dbReference type="KEGG" id="nma:NMA0473"/>
<dbReference type="HOGENOM" id="CLU_016503_3_0_4"/>
<dbReference type="Proteomes" id="UP000000626">
    <property type="component" value="Chromosome"/>
</dbReference>
<dbReference type="GO" id="GO:0005737">
    <property type="term" value="C:cytoplasm"/>
    <property type="evidence" value="ECO:0007669"/>
    <property type="project" value="UniProtKB-SubCell"/>
</dbReference>
<dbReference type="GO" id="GO:0005524">
    <property type="term" value="F:ATP binding"/>
    <property type="evidence" value="ECO:0007669"/>
    <property type="project" value="UniProtKB-UniRule"/>
</dbReference>
<dbReference type="GO" id="GO:0140662">
    <property type="term" value="F:ATP-dependent protein folding chaperone"/>
    <property type="evidence" value="ECO:0007669"/>
    <property type="project" value="InterPro"/>
</dbReference>
<dbReference type="GO" id="GO:0016853">
    <property type="term" value="F:isomerase activity"/>
    <property type="evidence" value="ECO:0007669"/>
    <property type="project" value="UniProtKB-KW"/>
</dbReference>
<dbReference type="GO" id="GO:0051082">
    <property type="term" value="F:unfolded protein binding"/>
    <property type="evidence" value="ECO:0007669"/>
    <property type="project" value="UniProtKB-UniRule"/>
</dbReference>
<dbReference type="GO" id="GO:0042026">
    <property type="term" value="P:protein refolding"/>
    <property type="evidence" value="ECO:0007669"/>
    <property type="project" value="UniProtKB-UniRule"/>
</dbReference>
<dbReference type="CDD" id="cd03344">
    <property type="entry name" value="GroEL"/>
    <property type="match status" value="1"/>
</dbReference>
<dbReference type="FunFam" id="1.10.560.10:FF:000001">
    <property type="entry name" value="60 kDa chaperonin"/>
    <property type="match status" value="1"/>
</dbReference>
<dbReference type="FunFam" id="3.50.7.10:FF:000001">
    <property type="entry name" value="60 kDa chaperonin"/>
    <property type="match status" value="1"/>
</dbReference>
<dbReference type="Gene3D" id="3.50.7.10">
    <property type="entry name" value="GroEL"/>
    <property type="match status" value="1"/>
</dbReference>
<dbReference type="Gene3D" id="1.10.560.10">
    <property type="entry name" value="GroEL-like equatorial domain"/>
    <property type="match status" value="1"/>
</dbReference>
<dbReference type="Gene3D" id="3.30.260.10">
    <property type="entry name" value="TCP-1-like chaperonin intermediate domain"/>
    <property type="match status" value="1"/>
</dbReference>
<dbReference type="HAMAP" id="MF_00600">
    <property type="entry name" value="CH60"/>
    <property type="match status" value="1"/>
</dbReference>
<dbReference type="InterPro" id="IPR018370">
    <property type="entry name" value="Chaperonin_Cpn60_CS"/>
</dbReference>
<dbReference type="InterPro" id="IPR001844">
    <property type="entry name" value="Cpn60/GroEL"/>
</dbReference>
<dbReference type="InterPro" id="IPR002423">
    <property type="entry name" value="Cpn60/GroEL/TCP-1"/>
</dbReference>
<dbReference type="InterPro" id="IPR027409">
    <property type="entry name" value="GroEL-like_apical_dom_sf"/>
</dbReference>
<dbReference type="InterPro" id="IPR027413">
    <property type="entry name" value="GROEL-like_equatorial_sf"/>
</dbReference>
<dbReference type="InterPro" id="IPR027410">
    <property type="entry name" value="TCP-1-like_intermed_sf"/>
</dbReference>
<dbReference type="NCBIfam" id="TIGR02348">
    <property type="entry name" value="GroEL"/>
    <property type="match status" value="1"/>
</dbReference>
<dbReference type="NCBIfam" id="NF000592">
    <property type="entry name" value="PRK00013.1"/>
    <property type="match status" value="1"/>
</dbReference>
<dbReference type="NCBIfam" id="NF009487">
    <property type="entry name" value="PRK12849.1"/>
    <property type="match status" value="1"/>
</dbReference>
<dbReference type="NCBIfam" id="NF009488">
    <property type="entry name" value="PRK12850.1"/>
    <property type="match status" value="1"/>
</dbReference>
<dbReference type="NCBIfam" id="NF009489">
    <property type="entry name" value="PRK12851.1"/>
    <property type="match status" value="1"/>
</dbReference>
<dbReference type="PANTHER" id="PTHR45633">
    <property type="entry name" value="60 KDA HEAT SHOCK PROTEIN, MITOCHONDRIAL"/>
    <property type="match status" value="1"/>
</dbReference>
<dbReference type="Pfam" id="PF00118">
    <property type="entry name" value="Cpn60_TCP1"/>
    <property type="match status" value="1"/>
</dbReference>
<dbReference type="PRINTS" id="PR00298">
    <property type="entry name" value="CHAPERONIN60"/>
</dbReference>
<dbReference type="SUPFAM" id="SSF52029">
    <property type="entry name" value="GroEL apical domain-like"/>
    <property type="match status" value="1"/>
</dbReference>
<dbReference type="SUPFAM" id="SSF48592">
    <property type="entry name" value="GroEL equatorial domain-like"/>
    <property type="match status" value="1"/>
</dbReference>
<dbReference type="SUPFAM" id="SSF54849">
    <property type="entry name" value="GroEL-intermediate domain like"/>
    <property type="match status" value="1"/>
</dbReference>
<dbReference type="PROSITE" id="PS00296">
    <property type="entry name" value="CHAPERONINS_CPN60"/>
    <property type="match status" value="1"/>
</dbReference>
<accession>P57006</accession>
<accession>A1IPT3</accession>
<name>CH60_NEIMA</name>
<organism>
    <name type="scientific">Neisseria meningitidis serogroup A / serotype 4A (strain DSM 15465 / Z2491)</name>
    <dbReference type="NCBI Taxonomy" id="122587"/>
    <lineage>
        <taxon>Bacteria</taxon>
        <taxon>Pseudomonadati</taxon>
        <taxon>Pseudomonadota</taxon>
        <taxon>Betaproteobacteria</taxon>
        <taxon>Neisseriales</taxon>
        <taxon>Neisseriaceae</taxon>
        <taxon>Neisseria</taxon>
    </lineage>
</organism>
<keyword id="KW-0067">ATP-binding</keyword>
<keyword id="KW-0143">Chaperone</keyword>
<keyword id="KW-0963">Cytoplasm</keyword>
<keyword id="KW-0413">Isomerase</keyword>
<keyword id="KW-0547">Nucleotide-binding</keyword>